<reference key="1">
    <citation type="journal article" date="2003" name="Nature">
        <title>The genome sequence of Bacillus anthracis Ames and comparison to closely related bacteria.</title>
        <authorList>
            <person name="Read T.D."/>
            <person name="Peterson S.N."/>
            <person name="Tourasse N.J."/>
            <person name="Baillie L.W."/>
            <person name="Paulsen I.T."/>
            <person name="Nelson K.E."/>
            <person name="Tettelin H."/>
            <person name="Fouts D.E."/>
            <person name="Eisen J.A."/>
            <person name="Gill S.R."/>
            <person name="Holtzapple E.K."/>
            <person name="Okstad O.A."/>
            <person name="Helgason E."/>
            <person name="Rilstone J."/>
            <person name="Wu M."/>
            <person name="Kolonay J.F."/>
            <person name="Beanan M.J."/>
            <person name="Dodson R.J."/>
            <person name="Brinkac L.M."/>
            <person name="Gwinn M.L."/>
            <person name="DeBoy R.T."/>
            <person name="Madpu R."/>
            <person name="Daugherty S.C."/>
            <person name="Durkin A.S."/>
            <person name="Haft D.H."/>
            <person name="Nelson W.C."/>
            <person name="Peterson J.D."/>
            <person name="Pop M."/>
            <person name="Khouri H.M."/>
            <person name="Radune D."/>
            <person name="Benton J.L."/>
            <person name="Mahamoud Y."/>
            <person name="Jiang L."/>
            <person name="Hance I.R."/>
            <person name="Weidman J.F."/>
            <person name="Berry K.J."/>
            <person name="Plaut R.D."/>
            <person name="Wolf A.M."/>
            <person name="Watkins K.L."/>
            <person name="Nierman W.C."/>
            <person name="Hazen A."/>
            <person name="Cline R.T."/>
            <person name="Redmond C."/>
            <person name="Thwaite J.E."/>
            <person name="White O."/>
            <person name="Salzberg S.L."/>
            <person name="Thomason B."/>
            <person name="Friedlander A.M."/>
            <person name="Koehler T.M."/>
            <person name="Hanna P.C."/>
            <person name="Kolstoe A.-B."/>
            <person name="Fraser C.M."/>
        </authorList>
    </citation>
    <scope>NUCLEOTIDE SEQUENCE [LARGE SCALE GENOMIC DNA]</scope>
    <source>
        <strain>Ames / isolate Porton</strain>
    </source>
</reference>
<reference key="2">
    <citation type="journal article" date="2009" name="J. Bacteriol.">
        <title>The complete genome sequence of Bacillus anthracis Ames 'Ancestor'.</title>
        <authorList>
            <person name="Ravel J."/>
            <person name="Jiang L."/>
            <person name="Stanley S.T."/>
            <person name="Wilson M.R."/>
            <person name="Decker R.S."/>
            <person name="Read T.D."/>
            <person name="Worsham P."/>
            <person name="Keim P.S."/>
            <person name="Salzberg S.L."/>
            <person name="Fraser-Liggett C.M."/>
            <person name="Rasko D.A."/>
        </authorList>
    </citation>
    <scope>NUCLEOTIDE SEQUENCE [LARGE SCALE GENOMIC DNA]</scope>
    <source>
        <strain>Ames ancestor</strain>
    </source>
</reference>
<reference key="3">
    <citation type="submission" date="2004-01" db="EMBL/GenBank/DDBJ databases">
        <title>Complete genome sequence of Bacillus anthracis Sterne.</title>
        <authorList>
            <person name="Brettin T.S."/>
            <person name="Bruce D."/>
            <person name="Challacombe J.F."/>
            <person name="Gilna P."/>
            <person name="Han C."/>
            <person name="Hill K."/>
            <person name="Hitchcock P."/>
            <person name="Jackson P."/>
            <person name="Keim P."/>
            <person name="Longmire J."/>
            <person name="Lucas S."/>
            <person name="Okinaka R."/>
            <person name="Richardson P."/>
            <person name="Rubin E."/>
            <person name="Tice H."/>
        </authorList>
    </citation>
    <scope>NUCLEOTIDE SEQUENCE [LARGE SCALE GENOMIC DNA]</scope>
    <source>
        <strain>Sterne</strain>
    </source>
</reference>
<protein>
    <recommendedName>
        <fullName evidence="1">Uracil phosphoribosyltransferase</fullName>
        <ecNumber evidence="1">2.4.2.9</ecNumber>
    </recommendedName>
    <alternativeName>
        <fullName evidence="1">UMP pyrophosphorylase</fullName>
    </alternativeName>
    <alternativeName>
        <fullName evidence="1">UPRTase</fullName>
    </alternativeName>
</protein>
<gene>
    <name evidence="1" type="primary">upp</name>
    <name type="ordered locus">BA_5557</name>
    <name type="ordered locus">GBAA_5557</name>
    <name type="ordered locus">BAS5164</name>
</gene>
<feature type="chain" id="PRO_0000120793" description="Uracil phosphoribosyltransferase">
    <location>
        <begin position="1"/>
        <end position="209"/>
    </location>
</feature>
<feature type="binding site" evidence="1">
    <location>
        <position position="79"/>
    </location>
    <ligand>
        <name>5-phospho-alpha-D-ribose 1-diphosphate</name>
        <dbReference type="ChEBI" id="CHEBI:58017"/>
    </ligand>
</feature>
<feature type="binding site" evidence="1">
    <location>
        <position position="104"/>
    </location>
    <ligand>
        <name>5-phospho-alpha-D-ribose 1-diphosphate</name>
        <dbReference type="ChEBI" id="CHEBI:58017"/>
    </ligand>
</feature>
<feature type="binding site" evidence="1">
    <location>
        <begin position="131"/>
        <end position="139"/>
    </location>
    <ligand>
        <name>5-phospho-alpha-D-ribose 1-diphosphate</name>
        <dbReference type="ChEBI" id="CHEBI:58017"/>
    </ligand>
</feature>
<feature type="binding site" evidence="1">
    <location>
        <position position="194"/>
    </location>
    <ligand>
        <name>uracil</name>
        <dbReference type="ChEBI" id="CHEBI:17568"/>
    </ligand>
</feature>
<feature type="binding site" evidence="1">
    <location>
        <begin position="199"/>
        <end position="201"/>
    </location>
    <ligand>
        <name>uracil</name>
        <dbReference type="ChEBI" id="CHEBI:17568"/>
    </ligand>
</feature>
<feature type="binding site" evidence="1">
    <location>
        <position position="200"/>
    </location>
    <ligand>
        <name>5-phospho-alpha-D-ribose 1-diphosphate</name>
        <dbReference type="ChEBI" id="CHEBI:58017"/>
    </ligand>
</feature>
<comment type="function">
    <text evidence="1">Catalyzes the conversion of uracil and 5-phospho-alpha-D-ribose 1-diphosphate (PRPP) to UMP and diphosphate.</text>
</comment>
<comment type="catalytic activity">
    <reaction evidence="1">
        <text>UMP + diphosphate = 5-phospho-alpha-D-ribose 1-diphosphate + uracil</text>
        <dbReference type="Rhea" id="RHEA:13017"/>
        <dbReference type="ChEBI" id="CHEBI:17568"/>
        <dbReference type="ChEBI" id="CHEBI:33019"/>
        <dbReference type="ChEBI" id="CHEBI:57865"/>
        <dbReference type="ChEBI" id="CHEBI:58017"/>
        <dbReference type="EC" id="2.4.2.9"/>
    </reaction>
</comment>
<comment type="cofactor">
    <cofactor evidence="1">
        <name>Mg(2+)</name>
        <dbReference type="ChEBI" id="CHEBI:18420"/>
    </cofactor>
    <text evidence="1">Binds 1 Mg(2+) ion per subunit. The magnesium is bound as Mg-PRPP.</text>
</comment>
<comment type="activity regulation">
    <text evidence="1">Allosterically activated by GTP.</text>
</comment>
<comment type="pathway">
    <text evidence="1">Pyrimidine metabolism; UMP biosynthesis via salvage pathway; UMP from uracil: step 1/1.</text>
</comment>
<comment type="similarity">
    <text evidence="1">Belongs to the UPRTase family.</text>
</comment>
<accession>Q81JY5</accession>
<accession>Q6HQI5</accession>
<accession>Q6KJV9</accession>
<name>UPP_BACAN</name>
<proteinExistence type="inferred from homology"/>
<evidence type="ECO:0000255" key="1">
    <source>
        <dbReference type="HAMAP-Rule" id="MF_01218"/>
    </source>
</evidence>
<keyword id="KW-0021">Allosteric enzyme</keyword>
<keyword id="KW-0328">Glycosyltransferase</keyword>
<keyword id="KW-0342">GTP-binding</keyword>
<keyword id="KW-0460">Magnesium</keyword>
<keyword id="KW-0547">Nucleotide-binding</keyword>
<keyword id="KW-1185">Reference proteome</keyword>
<keyword id="KW-0808">Transferase</keyword>
<sequence length="209" mass="22901">MGKLYVFDHPLIQHKITYIRDKNTGTKDFRELVDEVASLMAFEITRDLPLKDIEIETPVSKATTKVIAGKKLGLIPILRAGLGMVDGILKLIPAAKVGHVGLYRDPKTLQPVEYYVKLPTDVEERDFIVLDPMLATGGSAAEAINSLKKRGAKQIKLMCIVAAPEGVKVVQEEHPDVDIYVAALDEKLNDHGYVVPGLGDAGDRLFGTK</sequence>
<dbReference type="EC" id="2.4.2.9" evidence="1"/>
<dbReference type="EMBL" id="AE017334">
    <property type="protein sequence ID" value="AAT34701.1"/>
    <property type="molecule type" value="Genomic_DNA"/>
</dbReference>
<dbReference type="EMBL" id="AE017225">
    <property type="protein sequence ID" value="AAT57453.1"/>
    <property type="molecule type" value="Genomic_DNA"/>
</dbReference>
<dbReference type="EMBL" id="AE016879">
    <property type="protein sequence ID" value="AAP29201.1"/>
    <property type="molecule type" value="Genomic_DNA"/>
</dbReference>
<dbReference type="RefSeq" id="NP_847715.1">
    <property type="nucleotide sequence ID" value="NC_003997.3"/>
</dbReference>
<dbReference type="RefSeq" id="WP_000517539.1">
    <property type="nucleotide sequence ID" value="NZ_WXXJ01000038.1"/>
</dbReference>
<dbReference type="RefSeq" id="YP_031403.1">
    <property type="nucleotide sequence ID" value="NC_005945.1"/>
</dbReference>
<dbReference type="SMR" id="Q81JY5"/>
<dbReference type="IntAct" id="Q81JY5">
    <property type="interactions" value="1"/>
</dbReference>
<dbReference type="STRING" id="261594.GBAA_5557"/>
<dbReference type="DNASU" id="1085245"/>
<dbReference type="GeneID" id="93005808"/>
<dbReference type="KEGG" id="ban:BA_5557"/>
<dbReference type="KEGG" id="bar:GBAA_5557"/>
<dbReference type="KEGG" id="bat:BAS5164"/>
<dbReference type="PATRIC" id="fig|198094.11.peg.5517"/>
<dbReference type="eggNOG" id="COG0035">
    <property type="taxonomic scope" value="Bacteria"/>
</dbReference>
<dbReference type="HOGENOM" id="CLU_067096_2_2_9"/>
<dbReference type="OMA" id="KHKIGLM"/>
<dbReference type="OrthoDB" id="9781675at2"/>
<dbReference type="UniPathway" id="UPA00574">
    <property type="reaction ID" value="UER00636"/>
</dbReference>
<dbReference type="Proteomes" id="UP000000427">
    <property type="component" value="Chromosome"/>
</dbReference>
<dbReference type="Proteomes" id="UP000000594">
    <property type="component" value="Chromosome"/>
</dbReference>
<dbReference type="GO" id="GO:0005525">
    <property type="term" value="F:GTP binding"/>
    <property type="evidence" value="ECO:0007669"/>
    <property type="project" value="UniProtKB-KW"/>
</dbReference>
<dbReference type="GO" id="GO:0000287">
    <property type="term" value="F:magnesium ion binding"/>
    <property type="evidence" value="ECO:0007669"/>
    <property type="project" value="UniProtKB-UniRule"/>
</dbReference>
<dbReference type="GO" id="GO:0004845">
    <property type="term" value="F:uracil phosphoribosyltransferase activity"/>
    <property type="evidence" value="ECO:0007669"/>
    <property type="project" value="UniProtKB-UniRule"/>
</dbReference>
<dbReference type="GO" id="GO:0044206">
    <property type="term" value="P:UMP salvage"/>
    <property type="evidence" value="ECO:0007669"/>
    <property type="project" value="UniProtKB-UniRule"/>
</dbReference>
<dbReference type="GO" id="GO:0006223">
    <property type="term" value="P:uracil salvage"/>
    <property type="evidence" value="ECO:0007669"/>
    <property type="project" value="InterPro"/>
</dbReference>
<dbReference type="CDD" id="cd06223">
    <property type="entry name" value="PRTases_typeI"/>
    <property type="match status" value="1"/>
</dbReference>
<dbReference type="FunFam" id="3.40.50.2020:FF:000003">
    <property type="entry name" value="Uracil phosphoribosyltransferase"/>
    <property type="match status" value="1"/>
</dbReference>
<dbReference type="Gene3D" id="3.40.50.2020">
    <property type="match status" value="1"/>
</dbReference>
<dbReference type="HAMAP" id="MF_01218_B">
    <property type="entry name" value="Upp_B"/>
    <property type="match status" value="1"/>
</dbReference>
<dbReference type="InterPro" id="IPR000836">
    <property type="entry name" value="PRibTrfase_dom"/>
</dbReference>
<dbReference type="InterPro" id="IPR029057">
    <property type="entry name" value="PRTase-like"/>
</dbReference>
<dbReference type="InterPro" id="IPR034332">
    <property type="entry name" value="Upp_B"/>
</dbReference>
<dbReference type="InterPro" id="IPR050054">
    <property type="entry name" value="UPRTase/APRTase"/>
</dbReference>
<dbReference type="InterPro" id="IPR005765">
    <property type="entry name" value="Ura_phspho_trans"/>
</dbReference>
<dbReference type="NCBIfam" id="NF001097">
    <property type="entry name" value="PRK00129.1"/>
    <property type="match status" value="1"/>
</dbReference>
<dbReference type="NCBIfam" id="TIGR01091">
    <property type="entry name" value="upp"/>
    <property type="match status" value="1"/>
</dbReference>
<dbReference type="PANTHER" id="PTHR32315">
    <property type="entry name" value="ADENINE PHOSPHORIBOSYLTRANSFERASE"/>
    <property type="match status" value="1"/>
</dbReference>
<dbReference type="PANTHER" id="PTHR32315:SF4">
    <property type="entry name" value="URACIL PHOSPHORIBOSYLTRANSFERASE, CHLOROPLASTIC"/>
    <property type="match status" value="1"/>
</dbReference>
<dbReference type="Pfam" id="PF14681">
    <property type="entry name" value="UPRTase"/>
    <property type="match status" value="1"/>
</dbReference>
<dbReference type="SUPFAM" id="SSF53271">
    <property type="entry name" value="PRTase-like"/>
    <property type="match status" value="1"/>
</dbReference>
<organism>
    <name type="scientific">Bacillus anthracis</name>
    <dbReference type="NCBI Taxonomy" id="1392"/>
    <lineage>
        <taxon>Bacteria</taxon>
        <taxon>Bacillati</taxon>
        <taxon>Bacillota</taxon>
        <taxon>Bacilli</taxon>
        <taxon>Bacillales</taxon>
        <taxon>Bacillaceae</taxon>
        <taxon>Bacillus</taxon>
        <taxon>Bacillus cereus group</taxon>
    </lineage>
</organism>